<evidence type="ECO:0000250" key="1">
    <source>
        <dbReference type="UniProtKB" id="P0DL76"/>
    </source>
</evidence>
<evidence type="ECO:0000269" key="2">
    <source>
    </source>
</evidence>
<evidence type="ECO:0000303" key="3">
    <source>
    </source>
</evidence>
<evidence type="ECO:0000305" key="4"/>
<evidence type="ECO:0000305" key="5">
    <source>
    </source>
</evidence>
<organism>
    <name type="scientific">Conus villepinii</name>
    <name type="common">Villepin's cone</name>
    <dbReference type="NCBI Taxonomy" id="257347"/>
    <lineage>
        <taxon>Eukaryota</taxon>
        <taxon>Metazoa</taxon>
        <taxon>Spiralia</taxon>
        <taxon>Lophotrochozoa</taxon>
        <taxon>Mollusca</taxon>
        <taxon>Gastropoda</taxon>
        <taxon>Caenogastropoda</taxon>
        <taxon>Neogastropoda</taxon>
        <taxon>Conoidea</taxon>
        <taxon>Conidae</taxon>
        <taxon>Conus</taxon>
        <taxon>Dauciconus</taxon>
    </lineage>
</organism>
<accession>P85141</accession>
<sequence>CLIQDCPEG</sequence>
<proteinExistence type="evidence at protein level"/>
<reference key="1">
    <citation type="journal article" date="2007" name="Biochem. J.">
        <title>A vasopressin/oxytocin-related conopeptide with gamma-carboxyglutamate at position 8.</title>
        <authorList>
            <person name="Moeller C."/>
            <person name="Mari F."/>
        </authorList>
    </citation>
    <scope>PROTEIN SEQUENCE</scope>
    <scope>FUNCTION</scope>
    <scope>SUBCELLULAR LOCATION</scope>
    <scope>MASS SPECTROMETRY</scope>
    <scope>DISULFIDE BOND</scope>
    <scope>GAMMA-CARBOXYGLUTAMATION AT GLU-8</scope>
    <scope>AMIDATION AT GLY-9</scope>
    <source>
        <tissue>Venom</tissue>
    </source>
</reference>
<protein>
    <recommendedName>
        <fullName evidence="3">Gamma-conopressin vil</fullName>
    </recommendedName>
</protein>
<name>CONOV_CONVL</name>
<keyword id="KW-0027">Amidation</keyword>
<keyword id="KW-0106">Calcium</keyword>
<keyword id="KW-0903">Direct protein sequencing</keyword>
<keyword id="KW-1015">Disulfide bond</keyword>
<keyword id="KW-1213">G-protein coupled receptor impairing toxin</keyword>
<keyword id="KW-0301">Gamma-carboxyglutamic acid</keyword>
<keyword id="KW-0479">Metal-binding</keyword>
<keyword id="KW-0964">Secreted</keyword>
<keyword id="KW-0800">Toxin</keyword>
<dbReference type="ConoServer" id="1307">
    <property type="toxin name" value="Gamma-conopressin-vil"/>
</dbReference>
<dbReference type="GO" id="GO:0005576">
    <property type="term" value="C:extracellular region"/>
    <property type="evidence" value="ECO:0007669"/>
    <property type="project" value="UniProtKB-SubCell"/>
</dbReference>
<dbReference type="GO" id="GO:0046872">
    <property type="term" value="F:metal ion binding"/>
    <property type="evidence" value="ECO:0007669"/>
    <property type="project" value="UniProtKB-KW"/>
</dbReference>
<dbReference type="GO" id="GO:0090729">
    <property type="term" value="F:toxin activity"/>
    <property type="evidence" value="ECO:0007669"/>
    <property type="project" value="UniProtKB-KW"/>
</dbReference>
<feature type="peptide" id="PRO_0000287675" description="Gamma-conopressin vil" evidence="2">
    <location>
        <begin position="1"/>
        <end position="9"/>
    </location>
</feature>
<feature type="modified residue" description="4-carboxyglutamate" evidence="2">
    <location>
        <position position="8"/>
    </location>
</feature>
<feature type="modified residue" description="Glycine amide" evidence="2">
    <location>
        <position position="9"/>
    </location>
</feature>
<feature type="disulfide bond" evidence="2">
    <location>
        <begin position="1"/>
        <end position="6"/>
    </location>
</feature>
<comment type="function">
    <text evidence="1 2">Targets vasopressin-oxytocin related receptors (By similarity). Binds calcium (PubMed:17331075).</text>
</comment>
<comment type="subcellular location">
    <subcellularLocation>
        <location evidence="2">Secreted</location>
    </subcellularLocation>
</comment>
<comment type="tissue specificity">
    <text evidence="5">Expressed by the venom duct.</text>
</comment>
<comment type="domain">
    <text evidence="4">The cysteine framework is C-C.</text>
</comment>
<comment type="mass spectrometry"/>
<comment type="similarity">
    <text evidence="4">Belongs to the vasopressin/oxytocin family.</text>
</comment>